<proteinExistence type="inferred from homology"/>
<comment type="similarity">
    <text evidence="1">Belongs to the bacterial ribosomal protein bL33 family.</text>
</comment>
<name>RL331_LATSS</name>
<organism>
    <name type="scientific">Latilactobacillus sakei subsp. sakei (strain 23K)</name>
    <name type="common">Lactobacillus sakei subsp. sakei</name>
    <dbReference type="NCBI Taxonomy" id="314315"/>
    <lineage>
        <taxon>Bacteria</taxon>
        <taxon>Bacillati</taxon>
        <taxon>Bacillota</taxon>
        <taxon>Bacilli</taxon>
        <taxon>Lactobacillales</taxon>
        <taxon>Lactobacillaceae</taxon>
        <taxon>Latilactobacillus</taxon>
    </lineage>
</organism>
<keyword id="KW-1185">Reference proteome</keyword>
<keyword id="KW-0687">Ribonucleoprotein</keyword>
<keyword id="KW-0689">Ribosomal protein</keyword>
<accession>Q38VZ6</accession>
<sequence length="49" mass="6073">MRVHITMECTECHERSYLSNKNKRNNPDRLELKKYCPRERKVTLHRETK</sequence>
<reference key="1">
    <citation type="journal article" date="2005" name="Nat. Biotechnol.">
        <title>The complete genome sequence of the meat-borne lactic acid bacterium Lactobacillus sakei 23K.</title>
        <authorList>
            <person name="Chaillou S."/>
            <person name="Champomier-Verges M.-C."/>
            <person name="Cornet M."/>
            <person name="Crutz-Le Coq A.-M."/>
            <person name="Dudez A.-M."/>
            <person name="Martin V."/>
            <person name="Beaufils S."/>
            <person name="Darbon-Rongere E."/>
            <person name="Bossy R."/>
            <person name="Loux V."/>
            <person name="Zagorec M."/>
        </authorList>
    </citation>
    <scope>NUCLEOTIDE SEQUENCE [LARGE SCALE GENOMIC DNA]</scope>
    <source>
        <strain>23K</strain>
    </source>
</reference>
<gene>
    <name evidence="1" type="primary">rpmG1</name>
    <name type="ordered locus">LCA_1333</name>
</gene>
<dbReference type="EMBL" id="CR936503">
    <property type="protein sequence ID" value="CAI55637.1"/>
    <property type="molecule type" value="Genomic_DNA"/>
</dbReference>
<dbReference type="SMR" id="Q38VZ6"/>
<dbReference type="STRING" id="314315.LCA_1333"/>
<dbReference type="KEGG" id="lsa:LCA_1333"/>
<dbReference type="eggNOG" id="COG0267">
    <property type="taxonomic scope" value="Bacteria"/>
</dbReference>
<dbReference type="HOGENOM" id="CLU_190949_0_2_9"/>
<dbReference type="OrthoDB" id="197660at2"/>
<dbReference type="Proteomes" id="UP000002707">
    <property type="component" value="Chromosome"/>
</dbReference>
<dbReference type="GO" id="GO:0005737">
    <property type="term" value="C:cytoplasm"/>
    <property type="evidence" value="ECO:0007669"/>
    <property type="project" value="UniProtKB-ARBA"/>
</dbReference>
<dbReference type="GO" id="GO:1990904">
    <property type="term" value="C:ribonucleoprotein complex"/>
    <property type="evidence" value="ECO:0007669"/>
    <property type="project" value="UniProtKB-KW"/>
</dbReference>
<dbReference type="GO" id="GO:0005840">
    <property type="term" value="C:ribosome"/>
    <property type="evidence" value="ECO:0007669"/>
    <property type="project" value="UniProtKB-KW"/>
</dbReference>
<dbReference type="GO" id="GO:0003735">
    <property type="term" value="F:structural constituent of ribosome"/>
    <property type="evidence" value="ECO:0007669"/>
    <property type="project" value="InterPro"/>
</dbReference>
<dbReference type="GO" id="GO:0006412">
    <property type="term" value="P:translation"/>
    <property type="evidence" value="ECO:0007669"/>
    <property type="project" value="UniProtKB-UniRule"/>
</dbReference>
<dbReference type="Gene3D" id="2.20.28.120">
    <property type="entry name" value="Ribosomal protein L33"/>
    <property type="match status" value="1"/>
</dbReference>
<dbReference type="HAMAP" id="MF_00294">
    <property type="entry name" value="Ribosomal_bL33"/>
    <property type="match status" value="1"/>
</dbReference>
<dbReference type="InterPro" id="IPR001705">
    <property type="entry name" value="Ribosomal_bL33"/>
</dbReference>
<dbReference type="InterPro" id="IPR018264">
    <property type="entry name" value="Ribosomal_bL33_CS"/>
</dbReference>
<dbReference type="InterPro" id="IPR038584">
    <property type="entry name" value="Ribosomal_bL33_sf"/>
</dbReference>
<dbReference type="InterPro" id="IPR011332">
    <property type="entry name" value="Ribosomal_zn-bd"/>
</dbReference>
<dbReference type="NCBIfam" id="NF001764">
    <property type="entry name" value="PRK00504.1"/>
    <property type="match status" value="1"/>
</dbReference>
<dbReference type="NCBIfam" id="NF001860">
    <property type="entry name" value="PRK00595.1"/>
    <property type="match status" value="1"/>
</dbReference>
<dbReference type="NCBIfam" id="TIGR01023">
    <property type="entry name" value="rpmG_bact"/>
    <property type="match status" value="1"/>
</dbReference>
<dbReference type="PANTHER" id="PTHR43168">
    <property type="entry name" value="50S RIBOSOMAL PROTEIN L33, CHLOROPLASTIC"/>
    <property type="match status" value="1"/>
</dbReference>
<dbReference type="PANTHER" id="PTHR43168:SF2">
    <property type="entry name" value="LARGE RIBOSOMAL SUBUNIT PROTEIN BL33C"/>
    <property type="match status" value="1"/>
</dbReference>
<dbReference type="Pfam" id="PF00471">
    <property type="entry name" value="Ribosomal_L33"/>
    <property type="match status" value="1"/>
</dbReference>
<dbReference type="SUPFAM" id="SSF57829">
    <property type="entry name" value="Zn-binding ribosomal proteins"/>
    <property type="match status" value="1"/>
</dbReference>
<dbReference type="PROSITE" id="PS00582">
    <property type="entry name" value="RIBOSOMAL_L33"/>
    <property type="match status" value="1"/>
</dbReference>
<evidence type="ECO:0000255" key="1">
    <source>
        <dbReference type="HAMAP-Rule" id="MF_00294"/>
    </source>
</evidence>
<feature type="chain" id="PRO_0000356513" description="Large ribosomal subunit protein bL33A">
    <location>
        <begin position="1"/>
        <end position="49"/>
    </location>
</feature>
<protein>
    <recommendedName>
        <fullName evidence="1">Large ribosomal subunit protein bL33A</fullName>
    </recommendedName>
    <alternativeName>
        <fullName evidence="1">50S ribosomal protein L33 1</fullName>
    </alternativeName>
</protein>